<feature type="chain" id="PRO_0000094637" description="Holliday junction branch migration complex subunit RuvA">
    <location>
        <begin position="1"/>
        <end position="204"/>
    </location>
</feature>
<feature type="region of interest" description="Domain I" evidence="1">
    <location>
        <begin position="1"/>
        <end position="64"/>
    </location>
</feature>
<feature type="region of interest" description="Domain II" evidence="1">
    <location>
        <begin position="65"/>
        <end position="143"/>
    </location>
</feature>
<feature type="region of interest" description="Flexible linker" evidence="1">
    <location>
        <begin position="144"/>
        <end position="155"/>
    </location>
</feature>
<feature type="region of interest" description="Domain III" evidence="1">
    <location>
        <begin position="156"/>
        <end position="204"/>
    </location>
</feature>
<protein>
    <recommendedName>
        <fullName evidence="1">Holliday junction branch migration complex subunit RuvA</fullName>
    </recommendedName>
</protein>
<comment type="function">
    <text evidence="1">The RuvA-RuvB-RuvC complex processes Holliday junction (HJ) DNA during genetic recombination and DNA repair, while the RuvA-RuvB complex plays an important role in the rescue of blocked DNA replication forks via replication fork reversal (RFR). RuvA specifically binds to HJ cruciform DNA, conferring on it an open structure. The RuvB hexamer acts as an ATP-dependent pump, pulling dsDNA into and through the RuvAB complex. HJ branch migration allows RuvC to scan DNA until it finds its consensus sequence, where it cleaves and resolves the cruciform DNA.</text>
</comment>
<comment type="subunit">
    <text evidence="1">Homotetramer. Forms an RuvA(8)-RuvB(12)-Holliday junction (HJ) complex. HJ DNA is sandwiched between 2 RuvA tetramers; dsDNA enters through RuvA and exits via RuvB. An RuvB hexamer assembles on each DNA strand where it exits the tetramer. Each RuvB hexamer is contacted by two RuvA subunits (via domain III) on 2 adjacent RuvB subunits; this complex drives branch migration. In the full resolvosome a probable DNA-RuvA(4)-RuvB(12)-RuvC(2) complex forms which resolves the HJ.</text>
</comment>
<comment type="subcellular location">
    <subcellularLocation>
        <location evidence="1">Cytoplasm</location>
    </subcellularLocation>
</comment>
<comment type="domain">
    <text evidence="1">Has three domains with a flexible linker between the domains II and III and assumes an 'L' shape. Domain III is highly mobile and contacts RuvB.</text>
</comment>
<comment type="similarity">
    <text evidence="1">Belongs to the RuvA family.</text>
</comment>
<proteinExistence type="inferred from homology"/>
<dbReference type="EMBL" id="CP000057">
    <property type="protein sequence ID" value="AAX87372.1"/>
    <property type="molecule type" value="Genomic_DNA"/>
</dbReference>
<dbReference type="RefSeq" id="WP_011271983.1">
    <property type="nucleotide sequence ID" value="NC_007146.2"/>
</dbReference>
<dbReference type="SMR" id="Q4QNM5"/>
<dbReference type="KEGG" id="hit:NTHI0431"/>
<dbReference type="HOGENOM" id="CLU_087936_0_0_6"/>
<dbReference type="Proteomes" id="UP000002525">
    <property type="component" value="Chromosome"/>
</dbReference>
<dbReference type="GO" id="GO:0005737">
    <property type="term" value="C:cytoplasm"/>
    <property type="evidence" value="ECO:0007669"/>
    <property type="project" value="UniProtKB-SubCell"/>
</dbReference>
<dbReference type="GO" id="GO:0009379">
    <property type="term" value="C:Holliday junction helicase complex"/>
    <property type="evidence" value="ECO:0007669"/>
    <property type="project" value="InterPro"/>
</dbReference>
<dbReference type="GO" id="GO:0048476">
    <property type="term" value="C:Holliday junction resolvase complex"/>
    <property type="evidence" value="ECO:0007669"/>
    <property type="project" value="UniProtKB-UniRule"/>
</dbReference>
<dbReference type="GO" id="GO:0005524">
    <property type="term" value="F:ATP binding"/>
    <property type="evidence" value="ECO:0007669"/>
    <property type="project" value="InterPro"/>
</dbReference>
<dbReference type="GO" id="GO:0000400">
    <property type="term" value="F:four-way junction DNA binding"/>
    <property type="evidence" value="ECO:0007669"/>
    <property type="project" value="UniProtKB-UniRule"/>
</dbReference>
<dbReference type="GO" id="GO:0009378">
    <property type="term" value="F:four-way junction helicase activity"/>
    <property type="evidence" value="ECO:0007669"/>
    <property type="project" value="InterPro"/>
</dbReference>
<dbReference type="GO" id="GO:0006310">
    <property type="term" value="P:DNA recombination"/>
    <property type="evidence" value="ECO:0007669"/>
    <property type="project" value="UniProtKB-UniRule"/>
</dbReference>
<dbReference type="GO" id="GO:0006281">
    <property type="term" value="P:DNA repair"/>
    <property type="evidence" value="ECO:0007669"/>
    <property type="project" value="UniProtKB-UniRule"/>
</dbReference>
<dbReference type="CDD" id="cd14332">
    <property type="entry name" value="UBA_RuvA_C"/>
    <property type="match status" value="1"/>
</dbReference>
<dbReference type="FunFam" id="2.40.50.140:FF:000083">
    <property type="entry name" value="Holliday junction ATP-dependent DNA helicase RuvA"/>
    <property type="match status" value="1"/>
</dbReference>
<dbReference type="Gene3D" id="1.10.150.20">
    <property type="entry name" value="5' to 3' exonuclease, C-terminal subdomain"/>
    <property type="match status" value="1"/>
</dbReference>
<dbReference type="Gene3D" id="1.10.8.10">
    <property type="entry name" value="DNA helicase RuvA subunit, C-terminal domain"/>
    <property type="match status" value="1"/>
</dbReference>
<dbReference type="Gene3D" id="2.40.50.140">
    <property type="entry name" value="Nucleic acid-binding proteins"/>
    <property type="match status" value="1"/>
</dbReference>
<dbReference type="HAMAP" id="MF_00031">
    <property type="entry name" value="DNA_HJ_migration_RuvA"/>
    <property type="match status" value="1"/>
</dbReference>
<dbReference type="InterPro" id="IPR013849">
    <property type="entry name" value="DNA_helicase_Holl-junc_RuvA_I"/>
</dbReference>
<dbReference type="InterPro" id="IPR003583">
    <property type="entry name" value="Hlx-hairpin-Hlx_DNA-bd_motif"/>
</dbReference>
<dbReference type="InterPro" id="IPR012340">
    <property type="entry name" value="NA-bd_OB-fold"/>
</dbReference>
<dbReference type="InterPro" id="IPR000085">
    <property type="entry name" value="RuvA"/>
</dbReference>
<dbReference type="InterPro" id="IPR010994">
    <property type="entry name" value="RuvA_2-like"/>
</dbReference>
<dbReference type="InterPro" id="IPR011114">
    <property type="entry name" value="RuvA_C"/>
</dbReference>
<dbReference type="InterPro" id="IPR036267">
    <property type="entry name" value="RuvA_C_sf"/>
</dbReference>
<dbReference type="NCBIfam" id="TIGR00084">
    <property type="entry name" value="ruvA"/>
    <property type="match status" value="1"/>
</dbReference>
<dbReference type="Pfam" id="PF14520">
    <property type="entry name" value="HHH_5"/>
    <property type="match status" value="1"/>
</dbReference>
<dbReference type="Pfam" id="PF07499">
    <property type="entry name" value="RuvA_C"/>
    <property type="match status" value="1"/>
</dbReference>
<dbReference type="Pfam" id="PF01330">
    <property type="entry name" value="RuvA_N"/>
    <property type="match status" value="1"/>
</dbReference>
<dbReference type="SMART" id="SM00278">
    <property type="entry name" value="HhH1"/>
    <property type="match status" value="2"/>
</dbReference>
<dbReference type="SUPFAM" id="SSF46929">
    <property type="entry name" value="DNA helicase RuvA subunit, C-terminal domain"/>
    <property type="match status" value="1"/>
</dbReference>
<dbReference type="SUPFAM" id="SSF50249">
    <property type="entry name" value="Nucleic acid-binding proteins"/>
    <property type="match status" value="1"/>
</dbReference>
<dbReference type="SUPFAM" id="SSF47781">
    <property type="entry name" value="RuvA domain 2-like"/>
    <property type="match status" value="1"/>
</dbReference>
<accession>Q4QNM5</accession>
<keyword id="KW-0963">Cytoplasm</keyword>
<keyword id="KW-0227">DNA damage</keyword>
<keyword id="KW-0233">DNA recombination</keyword>
<keyword id="KW-0234">DNA repair</keyword>
<keyword id="KW-0238">DNA-binding</keyword>
<reference key="1">
    <citation type="journal article" date="2005" name="J. Bacteriol.">
        <title>Genomic sequence of an otitis media isolate of nontypeable Haemophilus influenzae: comparative study with H. influenzae serotype d, strain KW20.</title>
        <authorList>
            <person name="Harrison A."/>
            <person name="Dyer D.W."/>
            <person name="Gillaspy A."/>
            <person name="Ray W.C."/>
            <person name="Mungur R."/>
            <person name="Carson M.B."/>
            <person name="Zhong H."/>
            <person name="Gipson J."/>
            <person name="Gipson M."/>
            <person name="Johnson L.S."/>
            <person name="Lewis L."/>
            <person name="Bakaletz L.O."/>
            <person name="Munson R.S. Jr."/>
        </authorList>
    </citation>
    <scope>NUCLEOTIDE SEQUENCE [LARGE SCALE GENOMIC DNA]</scope>
    <source>
        <strain>86-028NP</strain>
    </source>
</reference>
<gene>
    <name evidence="1" type="primary">ruvA</name>
    <name type="ordered locus">NTHI0431</name>
</gene>
<sequence length="204" mass="22561">MIGRLQGILLEKQPPEILLNVQGVGYELLLPMTSFYDLPEIGQETTLFTHLVVREDAHLLFGFAQKTDRTLFRELIKTNGVGPKLALAILSAMSVEQFAYAIEREELSKLTKIPGVGKKTAERLLVELKGKFKGIKQSDFFVESTHIPLSPSIESHSESSSDEAISALIALGYKPAEAEKMVKRVAKPELTSEQVIREALKAAL</sequence>
<evidence type="ECO:0000255" key="1">
    <source>
        <dbReference type="HAMAP-Rule" id="MF_00031"/>
    </source>
</evidence>
<name>RUVA_HAEI8</name>
<organism>
    <name type="scientific">Haemophilus influenzae (strain 86-028NP)</name>
    <dbReference type="NCBI Taxonomy" id="281310"/>
    <lineage>
        <taxon>Bacteria</taxon>
        <taxon>Pseudomonadati</taxon>
        <taxon>Pseudomonadota</taxon>
        <taxon>Gammaproteobacteria</taxon>
        <taxon>Pasteurellales</taxon>
        <taxon>Pasteurellaceae</taxon>
        <taxon>Haemophilus</taxon>
    </lineage>
</organism>